<name>5NTD_RAT</name>
<feature type="signal peptide" evidence="5">
    <location>
        <begin position="1"/>
        <end position="28"/>
    </location>
</feature>
<feature type="chain" id="PRO_0000000019" description="5'-nucleotidase">
    <location>
        <begin position="29"/>
        <end position="551"/>
    </location>
</feature>
<feature type="propeptide" id="PRO_0000000020" description="Removed in mature form" evidence="7">
    <location>
        <begin position="552"/>
        <end position="576"/>
    </location>
</feature>
<feature type="binding site" evidence="1">
    <location>
        <position position="38"/>
    </location>
    <ligand>
        <name>Zn(2+)</name>
        <dbReference type="ChEBI" id="CHEBI:29105"/>
        <label>1</label>
    </ligand>
</feature>
<feature type="binding site" evidence="1">
    <location>
        <position position="38"/>
    </location>
    <ligand>
        <name>Zn(2+)</name>
        <dbReference type="ChEBI" id="CHEBI:29105"/>
        <label>2</label>
    </ligand>
</feature>
<feature type="binding site" evidence="1">
    <location>
        <position position="40"/>
    </location>
    <ligand>
        <name>Zn(2+)</name>
        <dbReference type="ChEBI" id="CHEBI:29105"/>
        <label>1</label>
    </ligand>
</feature>
<feature type="binding site" evidence="1">
    <location>
        <position position="87"/>
    </location>
    <ligand>
        <name>Zn(2+)</name>
        <dbReference type="ChEBI" id="CHEBI:29105"/>
        <label>1</label>
    </ligand>
</feature>
<feature type="binding site" evidence="1">
    <location>
        <position position="87"/>
    </location>
    <ligand>
        <name>Zn(2+)</name>
        <dbReference type="ChEBI" id="CHEBI:29105"/>
        <label>2</label>
    </ligand>
</feature>
<feature type="binding site" evidence="1">
    <location>
        <position position="119"/>
    </location>
    <ligand>
        <name>Zn(2+)</name>
        <dbReference type="ChEBI" id="CHEBI:29105"/>
        <label>2</label>
    </ligand>
</feature>
<feature type="binding site" evidence="1">
    <location>
        <position position="222"/>
    </location>
    <ligand>
        <name>Zn(2+)</name>
        <dbReference type="ChEBI" id="CHEBI:29105"/>
        <label>2</label>
    </ligand>
</feature>
<feature type="binding site" evidence="1">
    <location>
        <position position="245"/>
    </location>
    <ligand>
        <name>Zn(2+)</name>
        <dbReference type="ChEBI" id="CHEBI:29105"/>
        <label>2</label>
    </ligand>
</feature>
<feature type="binding site" evidence="1">
    <location>
        <position position="356"/>
    </location>
    <ligand>
        <name>AMP</name>
        <dbReference type="ChEBI" id="CHEBI:456215"/>
    </ligand>
</feature>
<feature type="binding site" evidence="1">
    <location>
        <position position="356"/>
    </location>
    <ligand>
        <name>IMP</name>
        <dbReference type="ChEBI" id="CHEBI:58053"/>
    </ligand>
</feature>
<feature type="binding site" evidence="1">
    <location>
        <position position="392"/>
    </location>
    <ligand>
        <name>AMP</name>
        <dbReference type="ChEBI" id="CHEBI:456215"/>
    </ligand>
</feature>
<feature type="binding site" evidence="1">
    <location>
        <position position="392"/>
    </location>
    <ligand>
        <name>IMP</name>
        <dbReference type="ChEBI" id="CHEBI:58053"/>
    </ligand>
</feature>
<feature type="binding site" evidence="1">
    <location>
        <position position="397"/>
    </location>
    <ligand>
        <name>AMP</name>
        <dbReference type="ChEBI" id="CHEBI:456215"/>
    </ligand>
</feature>
<feature type="binding site" evidence="1">
    <location>
        <position position="397"/>
    </location>
    <ligand>
        <name>IMP</name>
        <dbReference type="ChEBI" id="CHEBI:58053"/>
    </ligand>
</feature>
<feature type="binding site" evidence="1">
    <location>
        <position position="419"/>
    </location>
    <ligand>
        <name>AMP</name>
        <dbReference type="ChEBI" id="CHEBI:456215"/>
    </ligand>
</feature>
<feature type="binding site" evidence="1">
    <location>
        <position position="419"/>
    </location>
    <ligand>
        <name>IMP</name>
        <dbReference type="ChEBI" id="CHEBI:58053"/>
    </ligand>
</feature>
<feature type="binding site" evidence="1">
    <location>
        <position position="502"/>
    </location>
    <ligand>
        <name>AMP</name>
        <dbReference type="ChEBI" id="CHEBI:456215"/>
    </ligand>
</feature>
<feature type="binding site" evidence="1">
    <location>
        <position position="502"/>
    </location>
    <ligand>
        <name>IMP</name>
        <dbReference type="ChEBI" id="CHEBI:58053"/>
    </ligand>
</feature>
<feature type="binding site" evidence="1">
    <location>
        <position position="508"/>
    </location>
    <ligand>
        <name>AMP</name>
        <dbReference type="ChEBI" id="CHEBI:456215"/>
    </ligand>
</feature>
<feature type="binding site" evidence="1">
    <location>
        <position position="508"/>
    </location>
    <ligand>
        <name>IMP</name>
        <dbReference type="ChEBI" id="CHEBI:58053"/>
    </ligand>
</feature>
<feature type="site" description="Transition state stabilizer" evidence="1">
    <location>
        <position position="120"/>
    </location>
</feature>
<feature type="site" description="Transition state stabilizer" evidence="1">
    <location>
        <position position="123"/>
    </location>
</feature>
<feature type="lipid moiety-binding region" description="GPI-anchor amidated serine" evidence="4">
    <location>
        <position position="551"/>
    </location>
</feature>
<feature type="glycosylation site" description="N-linked (GlcNAc...) asparagine" evidence="2">
    <location>
        <position position="55"/>
    </location>
</feature>
<feature type="glycosylation site" description="N-linked (GlcNAc...) asparagine" evidence="2">
    <location>
        <position position="313"/>
    </location>
</feature>
<feature type="glycosylation site" description="N-linked (GlcNAc...) asparagine" evidence="2">
    <location>
        <position position="335"/>
    </location>
</feature>
<feature type="glycosylation site" description="N-linked (GlcNAc...) asparagine" evidence="2">
    <location>
        <position position="349"/>
    </location>
</feature>
<feature type="glycosylation site" description="N-linked (GlcNAc...) asparagine" evidence="2">
    <location>
        <position position="405"/>
    </location>
</feature>
<feature type="disulfide bond" evidence="1">
    <location>
        <begin position="53"/>
        <end position="59"/>
    </location>
</feature>
<feature type="disulfide bond" evidence="1">
    <location>
        <begin position="355"/>
        <end position="360"/>
    </location>
</feature>
<feature type="disulfide bond" evidence="1">
    <location>
        <begin position="367"/>
        <end position="389"/>
    </location>
</feature>
<feature type="disulfide bond" evidence="1">
    <location>
        <begin position="478"/>
        <end position="481"/>
    </location>
</feature>
<gene>
    <name type="primary">Nt5e</name>
    <name type="synonym">Nt5</name>
    <name type="synonym">Nte</name>
</gene>
<protein>
    <recommendedName>
        <fullName>5'-nucleotidase</fullName>
        <shortName>5'-NT</shortName>
        <ecNumber evidence="1">3.1.3.35</ecNumber>
        <ecNumber evidence="3">3.1.3.5</ecNumber>
        <ecNumber evidence="1">3.1.3.89</ecNumber>
        <ecNumber evidence="3">3.1.3.91</ecNumber>
        <ecNumber evidence="1">3.1.3.99</ecNumber>
    </recommendedName>
    <alternativeName>
        <fullName evidence="1">5'-deoxynucleotidase</fullName>
    </alternativeName>
    <alternativeName>
        <fullName>Ecto-5'-nucleotidase</fullName>
    </alternativeName>
    <alternativeName>
        <fullName evidence="1">IMP-specific 5'-nucleotidase</fullName>
    </alternativeName>
    <alternativeName>
        <fullName evidence="1">Thymidylate 5'-phosphatase</fullName>
    </alternativeName>
    <cdAntigenName>CD73</cdAntigenName>
</protein>
<accession>P21588</accession>
<comment type="function">
    <text evidence="1 3">Catalyzes the hydrolysis of nucleotide monophosphates, releasing inorganic phosphate and the corresponding nucleoside (PubMed:1770988). AMP is the preferred substrate but can also hydrolyze CMP and GMP (PubMed:1770988). Shows a preference for ribonucleotide monophosphates over their equivalent deoxyribose forms (By similarity). Other substrates include IMP, UMP, dAMP, dCMP, dTMP, NAD and NMN (By similarity).</text>
</comment>
<comment type="catalytic activity">
    <reaction evidence="3">
        <text>a ribonucleoside 5'-phosphate + H2O = a ribonucleoside + phosphate</text>
        <dbReference type="Rhea" id="RHEA:12484"/>
        <dbReference type="ChEBI" id="CHEBI:15377"/>
        <dbReference type="ChEBI" id="CHEBI:18254"/>
        <dbReference type="ChEBI" id="CHEBI:43474"/>
        <dbReference type="ChEBI" id="CHEBI:58043"/>
        <dbReference type="EC" id="3.1.3.5"/>
    </reaction>
</comment>
<comment type="catalytic activity">
    <reaction evidence="1">
        <text>a 2'-deoxyribonucleoside 5'-phosphate + H2O = a 2'-deoxyribonucleoside + phosphate</text>
        <dbReference type="Rhea" id="RHEA:36167"/>
        <dbReference type="ChEBI" id="CHEBI:15377"/>
        <dbReference type="ChEBI" id="CHEBI:18274"/>
        <dbReference type="ChEBI" id="CHEBI:43474"/>
        <dbReference type="ChEBI" id="CHEBI:65317"/>
        <dbReference type="EC" id="3.1.3.89"/>
    </reaction>
</comment>
<comment type="catalytic activity">
    <reaction evidence="1">
        <text>dTMP + H2O = thymidine + phosphate</text>
        <dbReference type="Rhea" id="RHEA:11080"/>
        <dbReference type="ChEBI" id="CHEBI:15377"/>
        <dbReference type="ChEBI" id="CHEBI:17748"/>
        <dbReference type="ChEBI" id="CHEBI:43474"/>
        <dbReference type="ChEBI" id="CHEBI:63528"/>
        <dbReference type="EC" id="3.1.3.35"/>
    </reaction>
</comment>
<comment type="catalytic activity">
    <reaction evidence="3">
        <text>CMP + H2O = cytidine + phosphate</text>
        <dbReference type="Rhea" id="RHEA:29367"/>
        <dbReference type="ChEBI" id="CHEBI:15377"/>
        <dbReference type="ChEBI" id="CHEBI:17562"/>
        <dbReference type="ChEBI" id="CHEBI:43474"/>
        <dbReference type="ChEBI" id="CHEBI:60377"/>
        <dbReference type="EC" id="3.1.3.91"/>
    </reaction>
</comment>
<comment type="catalytic activity">
    <reaction evidence="1">
        <text>IMP + H2O = inosine + phosphate</text>
        <dbReference type="Rhea" id="RHEA:27718"/>
        <dbReference type="ChEBI" id="CHEBI:15377"/>
        <dbReference type="ChEBI" id="CHEBI:17596"/>
        <dbReference type="ChEBI" id="CHEBI:43474"/>
        <dbReference type="ChEBI" id="CHEBI:58053"/>
        <dbReference type="EC" id="3.1.3.99"/>
    </reaction>
</comment>
<comment type="catalytic activity">
    <reaction evidence="3">
        <text>AMP + H2O = adenosine + phosphate</text>
        <dbReference type="Rhea" id="RHEA:29375"/>
        <dbReference type="ChEBI" id="CHEBI:15377"/>
        <dbReference type="ChEBI" id="CHEBI:16335"/>
        <dbReference type="ChEBI" id="CHEBI:43474"/>
        <dbReference type="ChEBI" id="CHEBI:456215"/>
    </reaction>
</comment>
<comment type="catalytic activity">
    <reaction evidence="3">
        <text>GMP + H2O = guanosine + phosphate</text>
        <dbReference type="Rhea" id="RHEA:27714"/>
        <dbReference type="ChEBI" id="CHEBI:15377"/>
        <dbReference type="ChEBI" id="CHEBI:16750"/>
        <dbReference type="ChEBI" id="CHEBI:43474"/>
        <dbReference type="ChEBI" id="CHEBI:58115"/>
    </reaction>
</comment>
<comment type="catalytic activity">
    <reaction evidence="1">
        <text>UMP + H2O = uridine + phosphate</text>
        <dbReference type="Rhea" id="RHEA:29359"/>
        <dbReference type="ChEBI" id="CHEBI:15377"/>
        <dbReference type="ChEBI" id="CHEBI:16704"/>
        <dbReference type="ChEBI" id="CHEBI:43474"/>
        <dbReference type="ChEBI" id="CHEBI:57865"/>
    </reaction>
</comment>
<comment type="catalytic activity">
    <reaction evidence="1">
        <text>dAMP + H2O = 2'-deoxyadenosine + phosphate</text>
        <dbReference type="Rhea" id="RHEA:29371"/>
        <dbReference type="ChEBI" id="CHEBI:15377"/>
        <dbReference type="ChEBI" id="CHEBI:17256"/>
        <dbReference type="ChEBI" id="CHEBI:43474"/>
        <dbReference type="ChEBI" id="CHEBI:58245"/>
    </reaction>
</comment>
<comment type="catalytic activity">
    <reaction evidence="1">
        <text>dCMP + H2O = 2'-deoxycytidine + phosphate</text>
        <dbReference type="Rhea" id="RHEA:29363"/>
        <dbReference type="ChEBI" id="CHEBI:15377"/>
        <dbReference type="ChEBI" id="CHEBI:15698"/>
        <dbReference type="ChEBI" id="CHEBI:43474"/>
        <dbReference type="ChEBI" id="CHEBI:57566"/>
    </reaction>
</comment>
<comment type="cofactor">
    <cofactor evidence="1">
        <name>Zn(2+)</name>
        <dbReference type="ChEBI" id="CHEBI:29105"/>
    </cofactor>
</comment>
<comment type="subunit">
    <text evidence="1">Homodimer.</text>
</comment>
<comment type="subcellular location">
    <subcellularLocation>
        <location evidence="3 4 5">Cell membrane</location>
        <topology evidence="4 5">Lipid-anchor</topology>
        <topology evidence="4 5">GPI-anchor</topology>
    </subcellularLocation>
</comment>
<comment type="tissue specificity">
    <text evidence="3">Expressed in the brain.</text>
</comment>
<comment type="similarity">
    <text evidence="6">Belongs to the 5'-nucleotidase family.</text>
</comment>
<organism>
    <name type="scientific">Rattus norvegicus</name>
    <name type="common">Rat</name>
    <dbReference type="NCBI Taxonomy" id="10116"/>
    <lineage>
        <taxon>Eukaryota</taxon>
        <taxon>Metazoa</taxon>
        <taxon>Chordata</taxon>
        <taxon>Craniata</taxon>
        <taxon>Vertebrata</taxon>
        <taxon>Euteleostomi</taxon>
        <taxon>Mammalia</taxon>
        <taxon>Eutheria</taxon>
        <taxon>Euarchontoglires</taxon>
        <taxon>Glires</taxon>
        <taxon>Rodentia</taxon>
        <taxon>Myomorpha</taxon>
        <taxon>Muroidea</taxon>
        <taxon>Muridae</taxon>
        <taxon>Murinae</taxon>
        <taxon>Rattus</taxon>
    </lineage>
</organism>
<evidence type="ECO:0000250" key="1">
    <source>
        <dbReference type="UniProtKB" id="P21589"/>
    </source>
</evidence>
<evidence type="ECO:0000255" key="2"/>
<evidence type="ECO:0000269" key="3">
    <source>
    </source>
</evidence>
<evidence type="ECO:0000269" key="4">
    <source>
    </source>
</evidence>
<evidence type="ECO:0000269" key="5">
    <source>
    </source>
</evidence>
<evidence type="ECO:0000305" key="6"/>
<evidence type="ECO:0000305" key="7">
    <source>
    </source>
</evidence>
<keyword id="KW-1003">Cell membrane</keyword>
<keyword id="KW-0903">Direct protein sequencing</keyword>
<keyword id="KW-1015">Disulfide bond</keyword>
<keyword id="KW-0325">Glycoprotein</keyword>
<keyword id="KW-0336">GPI-anchor</keyword>
<keyword id="KW-0378">Hydrolase</keyword>
<keyword id="KW-0449">Lipoprotein</keyword>
<keyword id="KW-0472">Membrane</keyword>
<keyword id="KW-0479">Metal-binding</keyword>
<keyword id="KW-0547">Nucleotide-binding</keyword>
<keyword id="KW-1185">Reference proteome</keyword>
<keyword id="KW-0732">Signal</keyword>
<keyword id="KW-0862">Zinc</keyword>
<proteinExistence type="evidence at protein level"/>
<reference key="1">
    <citation type="journal article" date="1990" name="J. Biol. Chem.">
        <title>Primary structure of rat liver 5'-nucleotidase deduced from the cDNA. Presence of the COOH-terminal hydrophobic domain for possible post-translational modification by glycophospholipid.</title>
        <authorList>
            <person name="Misumi Y."/>
            <person name="Ogata S."/>
            <person name="Hirose S."/>
            <person name="Ikehara Y."/>
        </authorList>
    </citation>
    <scope>NUCLEOTIDE SEQUENCE [MRNA]</scope>
    <scope>PARTIAL PROTEIN SEQUENCE</scope>
    <scope>PROTEIN SEQUENCE OF N-TERMINUS</scope>
    <scope>GPI-ANCHOR</scope>
    <scope>SUBCELLULAR LOCATION</scope>
    <source>
        <tissue>Liver</tissue>
    </source>
</reference>
<reference key="2">
    <citation type="journal article" date="1990" name="Biochemistry">
        <title>Membrane-anchoring domain of rat liver 5'-nucleotidase: identification of the COOH-terminal serine-523 covalently attached with a glycolipid.</title>
        <authorList>
            <person name="Ogata S."/>
            <person name="Hayashi Y."/>
            <person name="Misumi Y."/>
            <person name="Ikehara Y."/>
        </authorList>
    </citation>
    <scope>PROTEIN SEQUENCE OF 538-551</scope>
    <scope>GPI-ANCHOR AT SER-551</scope>
    <scope>SUBCELLULAR LOCATION</scope>
    <source>
        <tissue>Liver</tissue>
    </source>
</reference>
<reference key="3">
    <citation type="journal article" date="1991" name="Neurobiol. Aging">
        <title>5'-Nucleotidase activity increases in aging rat brain.</title>
        <authorList>
            <person name="Fuchs J.L."/>
        </authorList>
    </citation>
    <scope>FUNCTION</scope>
    <scope>CATALYTIC ACTIVITY</scope>
    <scope>SUBCELLULAR LOCATION</scope>
    <scope>TISSUE SPECIFICITY</scope>
</reference>
<sequence>MRPAAATAPKWLLLALSALLPLWPTAKSWELTIMHTNDVHSRLEQTSDDSTKCLNASLCVGGVARLFTKVQQIRKEEPNVLLLDAGDQYQGTIWFTVYKGLEVAHFMNLLGYDAMALGNHEFDNGVEGLIDPLLRNVKFPILSANIKARGPLAPQISGLYLPYKVLSVGGEVVGIVGYTSKETPFLSNPGTNLVFEDEVTALQPEVDKLKTLNVNKIIALGHSGFEMDKLIAQKVRGVDVVVGGHTNTFLYTGNPPSKEVPAGKYPFIVTSDDGRKVPVVQAYAFGKYLGYLKVEFDDKGNVVTSYGNPILLNSTIREDAAIKADINQWRIKLDNYSTQELGRTIVYLNGSAQECRFRECNMGNLICDAMINNNLRHPDEMFWNHVSMCIVNGGGIRSPIDERNNGTITWENLAAVLPFGGTFDLVQLKGSTLKKAFEHSVHRYGQSTGEFLQVGGIHVVYDISRKPWDRVVQLKVLCTKCRVPIYEPLEMDKVYKVVLPSYLVNGGDGFQMIKDELLKHDSGDQDISVVSEYISKMKVIYPAVEGRIKFSAASHYQGSFPLIILSFWAVILVLYQ</sequence>
<dbReference type="EC" id="3.1.3.35" evidence="1"/>
<dbReference type="EC" id="3.1.3.5" evidence="3"/>
<dbReference type="EC" id="3.1.3.89" evidence="1"/>
<dbReference type="EC" id="3.1.3.91" evidence="3"/>
<dbReference type="EC" id="3.1.3.99" evidence="1"/>
<dbReference type="EMBL" id="J05214">
    <property type="protein sequence ID" value="AAA40621.1"/>
    <property type="molecule type" value="mRNA"/>
</dbReference>
<dbReference type="PIR" id="A35036">
    <property type="entry name" value="A35036"/>
</dbReference>
<dbReference type="SMR" id="P21588"/>
<dbReference type="FunCoup" id="P21588">
    <property type="interactions" value="259"/>
</dbReference>
<dbReference type="STRING" id="10116.ENSRNOP00000015057"/>
<dbReference type="BindingDB" id="P21588"/>
<dbReference type="ChEMBL" id="CHEMBL1075214"/>
<dbReference type="DrugCentral" id="P21588"/>
<dbReference type="GuidetoPHARMACOLOGY" id="1232"/>
<dbReference type="GlyCosmos" id="P21588">
    <property type="glycosylation" value="5 sites, No reported glycans"/>
</dbReference>
<dbReference type="GlyGen" id="P21588">
    <property type="glycosylation" value="5 sites"/>
</dbReference>
<dbReference type="iPTMnet" id="P21588"/>
<dbReference type="PhosphoSitePlus" id="P21588"/>
<dbReference type="SwissPalm" id="P21588"/>
<dbReference type="PaxDb" id="10116-ENSRNOP00000015057"/>
<dbReference type="UCSC" id="RGD:61956">
    <property type="organism name" value="rat"/>
</dbReference>
<dbReference type="AGR" id="RGD:61956"/>
<dbReference type="RGD" id="61956">
    <property type="gene designation" value="Nt5e"/>
</dbReference>
<dbReference type="eggNOG" id="KOG4419">
    <property type="taxonomic scope" value="Eukaryota"/>
</dbReference>
<dbReference type="InParanoid" id="P21588"/>
<dbReference type="PhylomeDB" id="P21588"/>
<dbReference type="BRENDA" id="3.1.3.5">
    <property type="organism ID" value="5301"/>
</dbReference>
<dbReference type="Reactome" id="R-RNO-196807">
    <property type="pathway name" value="Nicotinate metabolism"/>
</dbReference>
<dbReference type="Reactome" id="R-RNO-73621">
    <property type="pathway name" value="Pyrimidine catabolism"/>
</dbReference>
<dbReference type="Reactome" id="R-RNO-74259">
    <property type="pathway name" value="Purine catabolism"/>
</dbReference>
<dbReference type="PRO" id="PR:P21588"/>
<dbReference type="Proteomes" id="UP000002494">
    <property type="component" value="Unplaced"/>
</dbReference>
<dbReference type="GO" id="GO:0009986">
    <property type="term" value="C:cell surface"/>
    <property type="evidence" value="ECO:0000314"/>
    <property type="project" value="RGD"/>
</dbReference>
<dbReference type="GO" id="GO:0009897">
    <property type="term" value="C:external side of plasma membrane"/>
    <property type="evidence" value="ECO:0000266"/>
    <property type="project" value="RGD"/>
</dbReference>
<dbReference type="GO" id="GO:0016020">
    <property type="term" value="C:membrane"/>
    <property type="evidence" value="ECO:0000266"/>
    <property type="project" value="RGD"/>
</dbReference>
<dbReference type="GO" id="GO:0005886">
    <property type="term" value="C:plasma membrane"/>
    <property type="evidence" value="ECO:0000314"/>
    <property type="project" value="UniProtKB"/>
</dbReference>
<dbReference type="GO" id="GO:0097060">
    <property type="term" value="C:synaptic membrane"/>
    <property type="evidence" value="ECO:0000314"/>
    <property type="project" value="RGD"/>
</dbReference>
<dbReference type="GO" id="GO:0002953">
    <property type="term" value="F:5'-deoxynucleotidase activity"/>
    <property type="evidence" value="ECO:0000266"/>
    <property type="project" value="RGD"/>
</dbReference>
<dbReference type="GO" id="GO:0008253">
    <property type="term" value="F:5'-nucleotidase activity"/>
    <property type="evidence" value="ECO:0000314"/>
    <property type="project" value="UniProtKB"/>
</dbReference>
<dbReference type="GO" id="GO:0008198">
    <property type="term" value="F:ferrous iron binding"/>
    <property type="evidence" value="ECO:0000314"/>
    <property type="project" value="RGD"/>
</dbReference>
<dbReference type="GO" id="GO:0050484">
    <property type="term" value="F:GMP 5'-nucleotidase activity"/>
    <property type="evidence" value="ECO:0000266"/>
    <property type="project" value="RGD"/>
</dbReference>
<dbReference type="GO" id="GO:0042802">
    <property type="term" value="F:identical protein binding"/>
    <property type="evidence" value="ECO:0000266"/>
    <property type="project" value="RGD"/>
</dbReference>
<dbReference type="GO" id="GO:0050483">
    <property type="term" value="F:IMP 5'-nucleotidase activity"/>
    <property type="evidence" value="ECO:0000266"/>
    <property type="project" value="RGD"/>
</dbReference>
<dbReference type="GO" id="GO:0000166">
    <property type="term" value="F:nucleotide binding"/>
    <property type="evidence" value="ECO:0007669"/>
    <property type="project" value="UniProtKB-KW"/>
</dbReference>
<dbReference type="GO" id="GO:0050340">
    <property type="term" value="F:thymidylate 5'-phosphatase activity"/>
    <property type="evidence" value="ECO:0000266"/>
    <property type="project" value="RGD"/>
</dbReference>
<dbReference type="GO" id="GO:0008270">
    <property type="term" value="F:zinc ion binding"/>
    <property type="evidence" value="ECO:0000266"/>
    <property type="project" value="RGD"/>
</dbReference>
<dbReference type="GO" id="GO:0046086">
    <property type="term" value="P:adenosine biosynthetic process"/>
    <property type="evidence" value="ECO:0000315"/>
    <property type="project" value="RGD"/>
</dbReference>
<dbReference type="GO" id="GO:0046085">
    <property type="term" value="P:adenosine metabolic process"/>
    <property type="evidence" value="ECO:0000314"/>
    <property type="project" value="RGD"/>
</dbReference>
<dbReference type="GO" id="GO:0046032">
    <property type="term" value="P:ADP catabolic process"/>
    <property type="evidence" value="ECO:0000266"/>
    <property type="project" value="RGD"/>
</dbReference>
<dbReference type="GO" id="GO:0006196">
    <property type="term" value="P:AMP catabolic process"/>
    <property type="evidence" value="ECO:0000314"/>
    <property type="project" value="RGD"/>
</dbReference>
<dbReference type="GO" id="GO:0046034">
    <property type="term" value="P:ATP metabolic process"/>
    <property type="evidence" value="ECO:0000266"/>
    <property type="project" value="RGD"/>
</dbReference>
<dbReference type="GO" id="GO:0055074">
    <property type="term" value="P:calcium ion homeostasis"/>
    <property type="evidence" value="ECO:0000266"/>
    <property type="project" value="RGD"/>
</dbReference>
<dbReference type="GO" id="GO:0140928">
    <property type="term" value="P:inhibition of non-skeletal tissue mineralization"/>
    <property type="evidence" value="ECO:0000266"/>
    <property type="project" value="RGD"/>
</dbReference>
<dbReference type="GO" id="GO:0007159">
    <property type="term" value="P:leukocyte cell-cell adhesion"/>
    <property type="evidence" value="ECO:0000266"/>
    <property type="project" value="RGD"/>
</dbReference>
<dbReference type="GO" id="GO:0050728">
    <property type="term" value="P:negative regulation of inflammatory response"/>
    <property type="evidence" value="ECO:0000266"/>
    <property type="project" value="RGD"/>
</dbReference>
<dbReference type="GO" id="GO:0046889">
    <property type="term" value="P:positive regulation of lipid biosynthetic process"/>
    <property type="evidence" value="ECO:0000270"/>
    <property type="project" value="RGD"/>
</dbReference>
<dbReference type="GO" id="GO:0010044">
    <property type="term" value="P:response to aluminum ion"/>
    <property type="evidence" value="ECO:0000270"/>
    <property type="project" value="RGD"/>
</dbReference>
<dbReference type="GO" id="GO:0033198">
    <property type="term" value="P:response to ATP"/>
    <property type="evidence" value="ECO:0000266"/>
    <property type="project" value="RGD"/>
</dbReference>
<dbReference type="CDD" id="cd07409">
    <property type="entry name" value="MPP_CD73_N"/>
    <property type="match status" value="1"/>
</dbReference>
<dbReference type="FunFam" id="3.90.780.10:FF:000001">
    <property type="entry name" value="NT5E isoform 3"/>
    <property type="match status" value="1"/>
</dbReference>
<dbReference type="FunFam" id="3.60.21.10:FF:000020">
    <property type="entry name" value="NT5E isoform 4"/>
    <property type="match status" value="1"/>
</dbReference>
<dbReference type="Gene3D" id="3.60.21.10">
    <property type="match status" value="1"/>
</dbReference>
<dbReference type="Gene3D" id="3.90.780.10">
    <property type="entry name" value="5'-Nucleotidase, C-terminal domain"/>
    <property type="match status" value="1"/>
</dbReference>
<dbReference type="InterPro" id="IPR008334">
    <property type="entry name" value="5'-Nucleotdase_C"/>
</dbReference>
<dbReference type="InterPro" id="IPR036907">
    <property type="entry name" value="5'-Nucleotdase_C_sf"/>
</dbReference>
<dbReference type="InterPro" id="IPR006146">
    <property type="entry name" value="5'-Nucleotdase_CS"/>
</dbReference>
<dbReference type="InterPro" id="IPR006179">
    <property type="entry name" value="5_nucleotidase/apyrase"/>
</dbReference>
<dbReference type="InterPro" id="IPR004843">
    <property type="entry name" value="Calcineurin-like_PHP_ApaH"/>
</dbReference>
<dbReference type="InterPro" id="IPR029052">
    <property type="entry name" value="Metallo-depent_PP-like"/>
</dbReference>
<dbReference type="PANTHER" id="PTHR11575:SF24">
    <property type="entry name" value="5'-NUCLEOTIDASE"/>
    <property type="match status" value="1"/>
</dbReference>
<dbReference type="PANTHER" id="PTHR11575">
    <property type="entry name" value="5'-NUCLEOTIDASE-RELATED"/>
    <property type="match status" value="1"/>
</dbReference>
<dbReference type="Pfam" id="PF02872">
    <property type="entry name" value="5_nucleotid_C"/>
    <property type="match status" value="1"/>
</dbReference>
<dbReference type="Pfam" id="PF00149">
    <property type="entry name" value="Metallophos"/>
    <property type="match status" value="1"/>
</dbReference>
<dbReference type="PRINTS" id="PR01607">
    <property type="entry name" value="APYRASEFAMLY"/>
</dbReference>
<dbReference type="SUPFAM" id="SSF55816">
    <property type="entry name" value="5'-nucleotidase (syn. UDP-sugar hydrolase), C-terminal domain"/>
    <property type="match status" value="1"/>
</dbReference>
<dbReference type="SUPFAM" id="SSF56300">
    <property type="entry name" value="Metallo-dependent phosphatases"/>
    <property type="match status" value="1"/>
</dbReference>
<dbReference type="PROSITE" id="PS00785">
    <property type="entry name" value="5_NUCLEOTIDASE_1"/>
    <property type="match status" value="1"/>
</dbReference>
<dbReference type="PROSITE" id="PS00786">
    <property type="entry name" value="5_NUCLEOTIDASE_2"/>
    <property type="match status" value="1"/>
</dbReference>